<dbReference type="EMBL" id="X65060">
    <property type="protein sequence ID" value="CAA46193.1"/>
    <property type="molecule type" value="Genomic_DNA"/>
</dbReference>
<dbReference type="PIR" id="S23279">
    <property type="entry name" value="S23279"/>
</dbReference>
<dbReference type="SMR" id="Q01702"/>
<dbReference type="FunCoup" id="Q01702">
    <property type="interactions" value="8"/>
</dbReference>
<dbReference type="STRING" id="7955.ENSDARP00000022291"/>
<dbReference type="PaxDb" id="7955-ENSDARP00000022291"/>
<dbReference type="AGR" id="ZFIN:ZDB-GENE-980526-280"/>
<dbReference type="ZFIN" id="ZDB-GENE-980526-280">
    <property type="gene designation" value="dlx3b"/>
</dbReference>
<dbReference type="eggNOG" id="KOG0850">
    <property type="taxonomic scope" value="Eukaryota"/>
</dbReference>
<dbReference type="InParanoid" id="Q01702"/>
<dbReference type="PRO" id="PR:Q01702"/>
<dbReference type="Proteomes" id="UP000000437">
    <property type="component" value="Unplaced"/>
</dbReference>
<dbReference type="GO" id="GO:0005634">
    <property type="term" value="C:nucleus"/>
    <property type="evidence" value="ECO:0007669"/>
    <property type="project" value="UniProtKB-SubCell"/>
</dbReference>
<dbReference type="GO" id="GO:0000981">
    <property type="term" value="F:DNA-binding transcription factor activity, RNA polymerase II-specific"/>
    <property type="evidence" value="ECO:0000318"/>
    <property type="project" value="GO_Central"/>
</dbReference>
<dbReference type="GO" id="GO:0000978">
    <property type="term" value="F:RNA polymerase II cis-regulatory region sequence-specific DNA binding"/>
    <property type="evidence" value="ECO:0000318"/>
    <property type="project" value="GO_Central"/>
</dbReference>
<dbReference type="GO" id="GO:0043565">
    <property type="term" value="F:sequence-specific DNA binding"/>
    <property type="evidence" value="ECO:0000353"/>
    <property type="project" value="ZFIN"/>
</dbReference>
<dbReference type="GO" id="GO:0042667">
    <property type="term" value="P:auditory receptor cell fate specification"/>
    <property type="evidence" value="ECO:0000316"/>
    <property type="project" value="ZFIN"/>
</dbReference>
<dbReference type="GO" id="GO:0043010">
    <property type="term" value="P:camera-type eye development"/>
    <property type="evidence" value="ECO:0000316"/>
    <property type="project" value="ZFIN"/>
</dbReference>
<dbReference type="GO" id="GO:0051216">
    <property type="term" value="P:cartilage development"/>
    <property type="evidence" value="ECO:0000316"/>
    <property type="project" value="ZFIN"/>
</dbReference>
<dbReference type="GO" id="GO:0048706">
    <property type="term" value="P:embryonic skeletal system development"/>
    <property type="evidence" value="ECO:0000318"/>
    <property type="project" value="GO_Central"/>
</dbReference>
<dbReference type="GO" id="GO:0048703">
    <property type="term" value="P:embryonic viscerocranium morphogenesis"/>
    <property type="evidence" value="ECO:0000316"/>
    <property type="project" value="ZFIN"/>
</dbReference>
<dbReference type="GO" id="GO:0035270">
    <property type="term" value="P:endocrine system development"/>
    <property type="evidence" value="ECO:0000316"/>
    <property type="project" value="ZFIN"/>
</dbReference>
<dbReference type="GO" id="GO:0030855">
    <property type="term" value="P:epithelial cell differentiation"/>
    <property type="evidence" value="ECO:0000318"/>
    <property type="project" value="GO_Central"/>
</dbReference>
<dbReference type="GO" id="GO:0060119">
    <property type="term" value="P:inner ear receptor cell development"/>
    <property type="evidence" value="ECO:0000316"/>
    <property type="project" value="ZFIN"/>
</dbReference>
<dbReference type="GO" id="GO:0070306">
    <property type="term" value="P:lens fiber cell differentiation"/>
    <property type="evidence" value="ECO:0000316"/>
    <property type="project" value="ZFIN"/>
</dbReference>
<dbReference type="GO" id="GO:0048666">
    <property type="term" value="P:neuron development"/>
    <property type="evidence" value="ECO:0000316"/>
    <property type="project" value="ZFIN"/>
</dbReference>
<dbReference type="GO" id="GO:0071698">
    <property type="term" value="P:olfactory placode development"/>
    <property type="evidence" value="ECO:0000315"/>
    <property type="project" value="ZFIN"/>
</dbReference>
<dbReference type="GO" id="GO:0030910">
    <property type="term" value="P:olfactory placode formation"/>
    <property type="evidence" value="ECO:0000316"/>
    <property type="project" value="ZFIN"/>
</dbReference>
<dbReference type="GO" id="GO:0043049">
    <property type="term" value="P:otic placode formation"/>
    <property type="evidence" value="ECO:0000315"/>
    <property type="project" value="ZFIN"/>
</dbReference>
<dbReference type="GO" id="GO:0071599">
    <property type="term" value="P:otic vesicle development"/>
    <property type="evidence" value="ECO:0000315"/>
    <property type="project" value="ZFIN"/>
</dbReference>
<dbReference type="GO" id="GO:0030916">
    <property type="term" value="P:otic vesicle formation"/>
    <property type="evidence" value="ECO:0000315"/>
    <property type="project" value="ZFIN"/>
</dbReference>
<dbReference type="GO" id="GO:0071600">
    <property type="term" value="P:otic vesicle morphogenesis"/>
    <property type="evidence" value="ECO:0000316"/>
    <property type="project" value="ZFIN"/>
</dbReference>
<dbReference type="GO" id="GO:0048840">
    <property type="term" value="P:otolith development"/>
    <property type="evidence" value="ECO:0000315"/>
    <property type="project" value="ZFIN"/>
</dbReference>
<dbReference type="GO" id="GO:1903010">
    <property type="term" value="P:regulation of bone development"/>
    <property type="evidence" value="ECO:0000315"/>
    <property type="project" value="ZFIN"/>
</dbReference>
<dbReference type="GO" id="GO:0006357">
    <property type="term" value="P:regulation of transcription by RNA polymerase II"/>
    <property type="evidence" value="ECO:0000318"/>
    <property type="project" value="GO_Central"/>
</dbReference>
<dbReference type="GO" id="GO:0034505">
    <property type="term" value="P:tooth mineralization"/>
    <property type="evidence" value="ECO:0000315"/>
    <property type="project" value="ZFIN"/>
</dbReference>
<dbReference type="GO" id="GO:0021559">
    <property type="term" value="P:trigeminal nerve development"/>
    <property type="evidence" value="ECO:0000316"/>
    <property type="project" value="ZFIN"/>
</dbReference>
<dbReference type="CDD" id="cd00086">
    <property type="entry name" value="homeodomain"/>
    <property type="match status" value="1"/>
</dbReference>
<dbReference type="FunFam" id="1.10.10.60:FF:000048">
    <property type="entry name" value="Distal-less homeobox 2"/>
    <property type="match status" value="1"/>
</dbReference>
<dbReference type="Gene3D" id="1.10.10.60">
    <property type="entry name" value="Homeodomain-like"/>
    <property type="match status" value="1"/>
</dbReference>
<dbReference type="InterPro" id="IPR050460">
    <property type="entry name" value="Distal-less_Homeobox_TF"/>
</dbReference>
<dbReference type="InterPro" id="IPR022135">
    <property type="entry name" value="Distal-less_N"/>
</dbReference>
<dbReference type="InterPro" id="IPR001356">
    <property type="entry name" value="HD"/>
</dbReference>
<dbReference type="InterPro" id="IPR020479">
    <property type="entry name" value="HD_metazoa"/>
</dbReference>
<dbReference type="InterPro" id="IPR017970">
    <property type="entry name" value="Homeobox_CS"/>
</dbReference>
<dbReference type="InterPro" id="IPR009057">
    <property type="entry name" value="Homeodomain-like_sf"/>
</dbReference>
<dbReference type="InterPro" id="IPR000047">
    <property type="entry name" value="HTH_motif"/>
</dbReference>
<dbReference type="PANTHER" id="PTHR24327">
    <property type="entry name" value="HOMEOBOX PROTEIN"/>
    <property type="match status" value="1"/>
</dbReference>
<dbReference type="PANTHER" id="PTHR24327:SF28">
    <property type="entry name" value="HOMEOBOX PROTEIN DLX-3"/>
    <property type="match status" value="1"/>
</dbReference>
<dbReference type="Pfam" id="PF12413">
    <property type="entry name" value="DLL_N"/>
    <property type="match status" value="1"/>
</dbReference>
<dbReference type="Pfam" id="PF00046">
    <property type="entry name" value="Homeodomain"/>
    <property type="match status" value="1"/>
</dbReference>
<dbReference type="PRINTS" id="PR00024">
    <property type="entry name" value="HOMEOBOX"/>
</dbReference>
<dbReference type="PRINTS" id="PR00031">
    <property type="entry name" value="HTHREPRESSR"/>
</dbReference>
<dbReference type="SMART" id="SM00389">
    <property type="entry name" value="HOX"/>
    <property type="match status" value="1"/>
</dbReference>
<dbReference type="SUPFAM" id="SSF46689">
    <property type="entry name" value="Homeodomain-like"/>
    <property type="match status" value="1"/>
</dbReference>
<dbReference type="PROSITE" id="PS00027">
    <property type="entry name" value="HOMEOBOX_1"/>
    <property type="match status" value="1"/>
</dbReference>
<dbReference type="PROSITE" id="PS50071">
    <property type="entry name" value="HOMEOBOX_2"/>
    <property type="match status" value="1"/>
</dbReference>
<comment type="function">
    <text>Involved in the development of the inner ear.</text>
</comment>
<comment type="subcellular location">
    <subcellularLocation>
        <location evidence="1">Nucleus</location>
    </subcellularLocation>
</comment>
<comment type="tissue specificity">
    <text>Expressed in the developing forebrain and fins.</text>
</comment>
<comment type="developmental stage">
    <text>Expressed during gastrulation, and shortly after gastrulation is expressed by presumptive precursor cells of the olfactory placodes, overlapping subsets of cells in the auditory vesicle, cells of the median fin fold, and cells of the visceral arches and their primordia.</text>
</comment>
<comment type="similarity">
    <text evidence="3">Belongs to the distal-less homeobox family.</text>
</comment>
<proteinExistence type="evidence at transcript level"/>
<reference key="1">
    <citation type="journal article" date="1992" name="Neuron">
        <title>Regional expression of three homeobox transcripts in the inner ear of zebrafish embryos.</title>
        <authorList>
            <person name="Ekker M."/>
            <person name="Akimenko M.-A."/>
            <person name="Bremiller R."/>
            <person name="Westerfield M."/>
        </authorList>
    </citation>
    <scope>NUCLEOTIDE SEQUENCE [GENOMIC DNA]</scope>
    <source>
        <strain>AB</strain>
        <tissue>Embryo</tissue>
    </source>
</reference>
<reference key="2">
    <citation type="journal article" date="1994" name="J. Neurosci.">
        <title>Combinatorial expression of three zebrafish genes related to distal-less: part of a homeobox gene code for the head.</title>
        <authorList>
            <person name="Akimenko M.-A."/>
            <person name="Ekker M."/>
            <person name="Wegner J."/>
            <person name="Lin W."/>
            <person name="Westerfield M."/>
        </authorList>
    </citation>
    <scope>NUCLEOTIDE SEQUENCE [GENOMIC DNA]</scope>
    <source>
        <strain>AB</strain>
        <tissue>Embryo</tissue>
    </source>
</reference>
<feature type="chain" id="PRO_0000049049" description="Homeobox protein Dlx3b">
    <location>
        <begin position="1"/>
        <end position="269"/>
    </location>
</feature>
<feature type="DNA-binding region" description="Homeobox" evidence="1">
    <location>
        <begin position="125"/>
        <end position="184"/>
    </location>
</feature>
<feature type="region of interest" description="Disordered" evidence="2">
    <location>
        <begin position="1"/>
        <end position="41"/>
    </location>
</feature>
<feature type="region of interest" description="Disordered" evidence="2">
    <location>
        <begin position="191"/>
        <end position="242"/>
    </location>
</feature>
<feature type="region of interest" description="Disordered" evidence="2">
    <location>
        <begin position="250"/>
        <end position="269"/>
    </location>
</feature>
<feature type="compositionally biased region" description="Basic and acidic residues" evidence="2">
    <location>
        <begin position="1"/>
        <end position="10"/>
    </location>
</feature>
<feature type="compositionally biased region" description="Polar residues" evidence="2">
    <location>
        <begin position="15"/>
        <end position="39"/>
    </location>
</feature>
<feature type="compositionally biased region" description="Polar residues" evidence="2">
    <location>
        <begin position="195"/>
        <end position="205"/>
    </location>
</feature>
<feature type="compositionally biased region" description="Polar residues" evidence="2">
    <location>
        <begin position="215"/>
        <end position="225"/>
    </location>
</feature>
<organism>
    <name type="scientific">Danio rerio</name>
    <name type="common">Zebrafish</name>
    <name type="synonym">Brachydanio rerio</name>
    <dbReference type="NCBI Taxonomy" id="7955"/>
    <lineage>
        <taxon>Eukaryota</taxon>
        <taxon>Metazoa</taxon>
        <taxon>Chordata</taxon>
        <taxon>Craniata</taxon>
        <taxon>Vertebrata</taxon>
        <taxon>Euteleostomi</taxon>
        <taxon>Actinopterygii</taxon>
        <taxon>Neopterygii</taxon>
        <taxon>Teleostei</taxon>
        <taxon>Ostariophysi</taxon>
        <taxon>Cypriniformes</taxon>
        <taxon>Danionidae</taxon>
        <taxon>Danioninae</taxon>
        <taxon>Danio</taxon>
    </lineage>
</organism>
<accession>Q01702</accession>
<protein>
    <recommendedName>
        <fullName>Homeobox protein Dlx3b</fullName>
        <shortName>DLX-3</shortName>
    </recommendedName>
    <alternativeName>
        <fullName>Distal-less homeobox protein 3b</fullName>
    </alternativeName>
</protein>
<keyword id="KW-0217">Developmental protein</keyword>
<keyword id="KW-0238">DNA-binding</keyword>
<keyword id="KW-0371">Homeobox</keyword>
<keyword id="KW-0539">Nucleus</keyword>
<keyword id="KW-1185">Reference proteome</keyword>
<name>DLX3B_DANRE</name>
<sequence>MSGPTYDRKIPGISTDLSGSMSCHPTSKDSPTLPESSATDMGYYSSHHEYYQSPPYPQQMNSYHQFNLSGMGATPGAYPTKTEYPYNTYRQYGHFNRDLQTPPQSAVKEEPETEVRMVNGKPKKIRKPRTIYSSYQLAALQRRFQKAQYLALPERAELAAQLGLTQTQVKIWFQNRRSKFKKLYKNGEVPLEHSPNASDSMACNSPPSPAVWDNNAHSSQVNRGQIPQPPLSSTPPYMEDYSNHWYQQGSHLQHPVHHPGPPQSVGAVY</sequence>
<evidence type="ECO:0000255" key="1">
    <source>
        <dbReference type="PROSITE-ProRule" id="PRU00108"/>
    </source>
</evidence>
<evidence type="ECO:0000256" key="2">
    <source>
        <dbReference type="SAM" id="MobiDB-lite"/>
    </source>
</evidence>
<evidence type="ECO:0000305" key="3"/>
<gene>
    <name type="primary">dlx3b</name>
    <name type="synonym">dlx3</name>
</gene>